<feature type="chain" id="PRO_1000212049" description="D-aminoacyl-tRNA deacylase">
    <location>
        <begin position="1"/>
        <end position="237"/>
    </location>
</feature>
<sequence>MDIKLVYSTSDPVGLTIKKLGYSFEEIDEDVTDFHYKNGEAIVIFSRHESKASIPSLTVHYPGNPSEEVMGGEPKKLGIAYPRLLTSILREIKKIDLDIEKTMEATHHGPTYQNVPVIFVEIGSDKTYWTNERIVRTLVDSTLKGIDKVDETDCRDYISGFGGPHYSKLFTKLADESCIGHVISKHYVDKLDDKVIIQAIANSVNNINKVVIDSLNLKQRERIIAALKSFDIHIQLR</sequence>
<accession>C3N7X8</accession>
<evidence type="ECO:0000255" key="1">
    <source>
        <dbReference type="HAMAP-Rule" id="MF_00562"/>
    </source>
</evidence>
<protein>
    <recommendedName>
        <fullName evidence="1">D-aminoacyl-tRNA deacylase</fullName>
        <ecNumber evidence="1">3.1.1.96</ecNumber>
    </recommendedName>
    <alternativeName>
        <fullName>D-tyrosyl-tRNA(Tyr) deacylase</fullName>
    </alternativeName>
</protein>
<keyword id="KW-0378">Hydrolase</keyword>
<keyword id="KW-0479">Metal-binding</keyword>
<keyword id="KW-0862">Zinc</keyword>
<proteinExistence type="inferred from homology"/>
<reference key="1">
    <citation type="journal article" date="2009" name="Proc. Natl. Acad. Sci. U.S.A.">
        <title>Biogeography of the Sulfolobus islandicus pan-genome.</title>
        <authorList>
            <person name="Reno M.L."/>
            <person name="Held N.L."/>
            <person name="Fields C.J."/>
            <person name="Burke P.V."/>
            <person name="Whitaker R.J."/>
        </authorList>
    </citation>
    <scope>NUCLEOTIDE SEQUENCE [LARGE SCALE GENOMIC DNA]</scope>
    <source>
        <strain>Y.G.57.14 / Yellowstone #1</strain>
    </source>
</reference>
<name>DTDA_SACI7</name>
<comment type="function">
    <text evidence="1">D-aminoacyl-tRNA deacylase with broad substrate specificity. By recycling D-aminoacyl-tRNA to D-amino acids and free tRNA molecules, this enzyme counteracts the toxicity associated with the formation of D-aminoacyl-tRNA entities in vivo.</text>
</comment>
<comment type="catalytic activity">
    <reaction evidence="1">
        <text>a D-aminoacyl-tRNA + H2O = a tRNA + a D-alpha-amino acid + H(+)</text>
        <dbReference type="Rhea" id="RHEA:13953"/>
        <dbReference type="Rhea" id="RHEA-COMP:10123"/>
        <dbReference type="Rhea" id="RHEA-COMP:10124"/>
        <dbReference type="ChEBI" id="CHEBI:15377"/>
        <dbReference type="ChEBI" id="CHEBI:15378"/>
        <dbReference type="ChEBI" id="CHEBI:59871"/>
        <dbReference type="ChEBI" id="CHEBI:78442"/>
        <dbReference type="ChEBI" id="CHEBI:79333"/>
        <dbReference type="EC" id="3.1.1.96"/>
    </reaction>
</comment>
<comment type="catalytic activity">
    <reaction evidence="1">
        <text>glycyl-tRNA(Ala) + H2O = tRNA(Ala) + glycine + H(+)</text>
        <dbReference type="Rhea" id="RHEA:53744"/>
        <dbReference type="Rhea" id="RHEA-COMP:9657"/>
        <dbReference type="Rhea" id="RHEA-COMP:13640"/>
        <dbReference type="ChEBI" id="CHEBI:15377"/>
        <dbReference type="ChEBI" id="CHEBI:15378"/>
        <dbReference type="ChEBI" id="CHEBI:57305"/>
        <dbReference type="ChEBI" id="CHEBI:78442"/>
        <dbReference type="ChEBI" id="CHEBI:78522"/>
        <dbReference type="EC" id="3.1.1.96"/>
    </reaction>
</comment>
<comment type="cofactor">
    <cofactor evidence="1">
        <name>Zn(2+)</name>
        <dbReference type="ChEBI" id="CHEBI:29105"/>
    </cofactor>
    <text evidence="1">Binds 2 Zn(2+) ions per subunit.</text>
</comment>
<comment type="subunit">
    <text evidence="1">Monomer.</text>
</comment>
<comment type="similarity">
    <text evidence="1">Belongs to the DtdA deacylase family.</text>
</comment>
<dbReference type="EC" id="3.1.1.96" evidence="1"/>
<dbReference type="EMBL" id="CP001403">
    <property type="protein sequence ID" value="ACP44346.1"/>
    <property type="molecule type" value="Genomic_DNA"/>
</dbReference>
<dbReference type="RefSeq" id="WP_012710231.1">
    <property type="nucleotide sequence ID" value="NC_012622.1"/>
</dbReference>
<dbReference type="SMR" id="C3N7X8"/>
<dbReference type="KEGG" id="siy:YG5714_0052"/>
<dbReference type="HOGENOM" id="CLU_056464_1_0_2"/>
<dbReference type="Proteomes" id="UP000002308">
    <property type="component" value="Chromosome"/>
</dbReference>
<dbReference type="GO" id="GO:0051499">
    <property type="term" value="F:D-aminoacyl-tRNA deacylase activity"/>
    <property type="evidence" value="ECO:0007669"/>
    <property type="project" value="UniProtKB-UniRule"/>
</dbReference>
<dbReference type="GO" id="GO:0008270">
    <property type="term" value="F:zinc ion binding"/>
    <property type="evidence" value="ECO:0007669"/>
    <property type="project" value="UniProtKB-UniRule"/>
</dbReference>
<dbReference type="GO" id="GO:0019478">
    <property type="term" value="P:D-amino acid catabolic process"/>
    <property type="evidence" value="ECO:0007669"/>
    <property type="project" value="UniProtKB-UniRule"/>
</dbReference>
<dbReference type="Gene3D" id="3.40.50.10700">
    <property type="entry name" value="AF0625-like"/>
    <property type="match status" value="1"/>
</dbReference>
<dbReference type="Gene3D" id="3.40.630.50">
    <property type="entry name" value="AF0625-like"/>
    <property type="match status" value="1"/>
</dbReference>
<dbReference type="HAMAP" id="MF_00562">
    <property type="entry name" value="Deacylase_DtdA"/>
    <property type="match status" value="1"/>
</dbReference>
<dbReference type="InterPro" id="IPR018033">
    <property type="entry name" value="Deacylase_DtdA_archaea"/>
</dbReference>
<dbReference type="InterPro" id="IPR007508">
    <property type="entry name" value="DtdA"/>
</dbReference>
<dbReference type="NCBIfam" id="NF003070">
    <property type="entry name" value="PRK03995.1-1"/>
    <property type="match status" value="1"/>
</dbReference>
<dbReference type="PANTHER" id="PTHR34667">
    <property type="entry name" value="D-AMINOACYL-TRNA DEACYLASE"/>
    <property type="match status" value="1"/>
</dbReference>
<dbReference type="PANTHER" id="PTHR34667:SF1">
    <property type="entry name" value="D-AMINOACYL-TRNA DEACYLASE"/>
    <property type="match status" value="1"/>
</dbReference>
<dbReference type="Pfam" id="PF04414">
    <property type="entry name" value="tRNA_deacylase"/>
    <property type="match status" value="1"/>
</dbReference>
<dbReference type="PIRSF" id="PIRSF016210">
    <property type="entry name" value="UCP016210"/>
    <property type="match status" value="1"/>
</dbReference>
<dbReference type="SUPFAM" id="SSF142535">
    <property type="entry name" value="AF0625-like"/>
    <property type="match status" value="1"/>
</dbReference>
<organism>
    <name type="scientific">Saccharolobus islandicus (strain Y.G.57.14 / Yellowstone #1)</name>
    <name type="common">Sulfolobus islandicus</name>
    <dbReference type="NCBI Taxonomy" id="439386"/>
    <lineage>
        <taxon>Archaea</taxon>
        <taxon>Thermoproteota</taxon>
        <taxon>Thermoprotei</taxon>
        <taxon>Sulfolobales</taxon>
        <taxon>Sulfolobaceae</taxon>
        <taxon>Saccharolobus</taxon>
    </lineage>
</organism>
<gene>
    <name evidence="1" type="primary">dtdA</name>
    <name type="ordered locus">YG5714_0052</name>
</gene>